<reference key="1">
    <citation type="submission" date="2009-03" db="EMBL/GenBank/DDBJ databases">
        <title>Complete genome sequence of Edwardsiella ictaluri 93-146.</title>
        <authorList>
            <person name="Williams M.L."/>
            <person name="Gillaspy A.F."/>
            <person name="Dyer D.W."/>
            <person name="Thune R.L."/>
            <person name="Waldbieser G.C."/>
            <person name="Schuster S.C."/>
            <person name="Gipson J."/>
            <person name="Zaitshik J."/>
            <person name="Landry C."/>
            <person name="Lawrence M.L."/>
        </authorList>
    </citation>
    <scope>NUCLEOTIDE SEQUENCE [LARGE SCALE GENOMIC DNA]</scope>
    <source>
        <strain>93-146</strain>
    </source>
</reference>
<sequence>MRIMQLDRHSLGFPSPEQALHDPNGLLAIGGDLQPARLLQAYQRGIFPWFSPGELILWWSPDPRAVLVPQALHISHSLRKALRRTTLRITLNQAFAAVIAGCAEQRAEGTWIGPSIQQAYCQLHQLGHAHSVEVWQEERLVGGLYGVAQGSLFCGESMFSRVSNASKMALWSFCSHFQRMGGQLIDCQVLNAHTASLGAHDIPRRRYLQHLLNCRSQTLAPRCWLPQSLTLPLPATATQIGE</sequence>
<keyword id="KW-0012">Acyltransferase</keyword>
<keyword id="KW-0963">Cytoplasm</keyword>
<keyword id="KW-0808">Transferase</keyword>
<comment type="function">
    <text evidence="1">Functions in the N-end rule pathway of protein degradation where it conjugates Leu, Phe and, less efficiently, Met from aminoacyl-tRNAs to the N-termini of proteins containing an N-terminal arginine or lysine.</text>
</comment>
<comment type="catalytic activity">
    <reaction evidence="1">
        <text>N-terminal L-lysyl-[protein] + L-leucyl-tRNA(Leu) = N-terminal L-leucyl-L-lysyl-[protein] + tRNA(Leu) + H(+)</text>
        <dbReference type="Rhea" id="RHEA:12340"/>
        <dbReference type="Rhea" id="RHEA-COMP:9613"/>
        <dbReference type="Rhea" id="RHEA-COMP:9622"/>
        <dbReference type="Rhea" id="RHEA-COMP:12670"/>
        <dbReference type="Rhea" id="RHEA-COMP:12671"/>
        <dbReference type="ChEBI" id="CHEBI:15378"/>
        <dbReference type="ChEBI" id="CHEBI:65249"/>
        <dbReference type="ChEBI" id="CHEBI:78442"/>
        <dbReference type="ChEBI" id="CHEBI:78494"/>
        <dbReference type="ChEBI" id="CHEBI:133043"/>
        <dbReference type="EC" id="2.3.2.6"/>
    </reaction>
</comment>
<comment type="catalytic activity">
    <reaction evidence="1">
        <text>N-terminal L-arginyl-[protein] + L-leucyl-tRNA(Leu) = N-terminal L-leucyl-L-arginyl-[protein] + tRNA(Leu) + H(+)</text>
        <dbReference type="Rhea" id="RHEA:50416"/>
        <dbReference type="Rhea" id="RHEA-COMP:9613"/>
        <dbReference type="Rhea" id="RHEA-COMP:9622"/>
        <dbReference type="Rhea" id="RHEA-COMP:12672"/>
        <dbReference type="Rhea" id="RHEA-COMP:12673"/>
        <dbReference type="ChEBI" id="CHEBI:15378"/>
        <dbReference type="ChEBI" id="CHEBI:64719"/>
        <dbReference type="ChEBI" id="CHEBI:78442"/>
        <dbReference type="ChEBI" id="CHEBI:78494"/>
        <dbReference type="ChEBI" id="CHEBI:133044"/>
        <dbReference type="EC" id="2.3.2.6"/>
    </reaction>
</comment>
<comment type="catalytic activity">
    <reaction evidence="1">
        <text>L-phenylalanyl-tRNA(Phe) + an N-terminal L-alpha-aminoacyl-[protein] = an N-terminal L-phenylalanyl-L-alpha-aminoacyl-[protein] + tRNA(Phe)</text>
        <dbReference type="Rhea" id="RHEA:43632"/>
        <dbReference type="Rhea" id="RHEA-COMP:9668"/>
        <dbReference type="Rhea" id="RHEA-COMP:9699"/>
        <dbReference type="Rhea" id="RHEA-COMP:10636"/>
        <dbReference type="Rhea" id="RHEA-COMP:10637"/>
        <dbReference type="ChEBI" id="CHEBI:78442"/>
        <dbReference type="ChEBI" id="CHEBI:78531"/>
        <dbReference type="ChEBI" id="CHEBI:78597"/>
        <dbReference type="ChEBI" id="CHEBI:83561"/>
        <dbReference type="EC" id="2.3.2.6"/>
    </reaction>
</comment>
<comment type="subcellular location">
    <subcellularLocation>
        <location evidence="1">Cytoplasm</location>
    </subcellularLocation>
</comment>
<comment type="similarity">
    <text evidence="1">Belongs to the L/F-transferase family.</text>
</comment>
<accession>C5BE98</accession>
<proteinExistence type="inferred from homology"/>
<name>LFTR_EDWI9</name>
<organism>
    <name type="scientific">Edwardsiella ictaluri (strain 93-146)</name>
    <dbReference type="NCBI Taxonomy" id="634503"/>
    <lineage>
        <taxon>Bacteria</taxon>
        <taxon>Pseudomonadati</taxon>
        <taxon>Pseudomonadota</taxon>
        <taxon>Gammaproteobacteria</taxon>
        <taxon>Enterobacterales</taxon>
        <taxon>Hafniaceae</taxon>
        <taxon>Edwardsiella</taxon>
    </lineage>
</organism>
<dbReference type="EC" id="2.3.2.6" evidence="1"/>
<dbReference type="EMBL" id="CP001600">
    <property type="protein sequence ID" value="ACR69659.1"/>
    <property type="molecule type" value="Genomic_DNA"/>
</dbReference>
<dbReference type="RefSeq" id="WP_015871772.1">
    <property type="nucleotide sequence ID" value="NZ_CP169062.1"/>
</dbReference>
<dbReference type="SMR" id="C5BE98"/>
<dbReference type="STRING" id="67780.B6E78_04570"/>
<dbReference type="GeneID" id="69539404"/>
<dbReference type="KEGG" id="eic:NT01EI_2489"/>
<dbReference type="PATRIC" id="fig|634503.3.peg.2212"/>
<dbReference type="HOGENOM" id="CLU_075045_0_0_6"/>
<dbReference type="OrthoDB" id="9790282at2"/>
<dbReference type="Proteomes" id="UP000001485">
    <property type="component" value="Chromosome"/>
</dbReference>
<dbReference type="GO" id="GO:0005737">
    <property type="term" value="C:cytoplasm"/>
    <property type="evidence" value="ECO:0007669"/>
    <property type="project" value="UniProtKB-SubCell"/>
</dbReference>
<dbReference type="GO" id="GO:0008914">
    <property type="term" value="F:leucyl-tRNA--protein transferase activity"/>
    <property type="evidence" value="ECO:0007669"/>
    <property type="project" value="UniProtKB-UniRule"/>
</dbReference>
<dbReference type="GO" id="GO:0030163">
    <property type="term" value="P:protein catabolic process"/>
    <property type="evidence" value="ECO:0007669"/>
    <property type="project" value="UniProtKB-UniRule"/>
</dbReference>
<dbReference type="FunFam" id="3.30.70.3550:FF:000001">
    <property type="entry name" value="Leucyl/phenylalanyl-tRNA--protein transferase"/>
    <property type="match status" value="1"/>
</dbReference>
<dbReference type="FunFam" id="3.40.630.70:FF:000001">
    <property type="entry name" value="Leucyl/phenylalanyl-tRNA--protein transferase"/>
    <property type="match status" value="1"/>
</dbReference>
<dbReference type="Gene3D" id="3.40.630.70">
    <property type="entry name" value="Leucyl/phenylalanyl-tRNA-protein transferase, C-terminal domain"/>
    <property type="match status" value="1"/>
</dbReference>
<dbReference type="Gene3D" id="3.30.70.3550">
    <property type="entry name" value="Leucyl/phenylalanyl-tRNA-protein transferase, N-terminal domain"/>
    <property type="match status" value="1"/>
</dbReference>
<dbReference type="HAMAP" id="MF_00688">
    <property type="entry name" value="Leu_Phe_trans"/>
    <property type="match status" value="1"/>
</dbReference>
<dbReference type="InterPro" id="IPR016181">
    <property type="entry name" value="Acyl_CoA_acyltransferase"/>
</dbReference>
<dbReference type="InterPro" id="IPR004616">
    <property type="entry name" value="Leu/Phe-tRNA_Trfase"/>
</dbReference>
<dbReference type="InterPro" id="IPR042203">
    <property type="entry name" value="Leu/Phe-tRNA_Trfase_C"/>
</dbReference>
<dbReference type="InterPro" id="IPR042221">
    <property type="entry name" value="Leu/Phe-tRNA_Trfase_N"/>
</dbReference>
<dbReference type="NCBIfam" id="TIGR00667">
    <property type="entry name" value="aat"/>
    <property type="match status" value="1"/>
</dbReference>
<dbReference type="PANTHER" id="PTHR30098">
    <property type="entry name" value="LEUCYL/PHENYLALANYL-TRNA--PROTEIN TRANSFERASE"/>
    <property type="match status" value="1"/>
</dbReference>
<dbReference type="PANTHER" id="PTHR30098:SF2">
    <property type="entry name" value="LEUCYL_PHENYLALANYL-TRNA--PROTEIN TRANSFERASE"/>
    <property type="match status" value="1"/>
</dbReference>
<dbReference type="Pfam" id="PF03588">
    <property type="entry name" value="Leu_Phe_trans"/>
    <property type="match status" value="1"/>
</dbReference>
<dbReference type="SUPFAM" id="SSF55729">
    <property type="entry name" value="Acyl-CoA N-acyltransferases (Nat)"/>
    <property type="match status" value="1"/>
</dbReference>
<protein>
    <recommendedName>
        <fullName evidence="1">Leucyl/phenylalanyl-tRNA--protein transferase</fullName>
        <ecNumber evidence="1">2.3.2.6</ecNumber>
    </recommendedName>
    <alternativeName>
        <fullName evidence="1">L/F-transferase</fullName>
    </alternativeName>
    <alternativeName>
        <fullName evidence="1">Leucyltransferase</fullName>
    </alternativeName>
    <alternativeName>
        <fullName evidence="1">Phenyalanyltransferase</fullName>
    </alternativeName>
</protein>
<evidence type="ECO:0000255" key="1">
    <source>
        <dbReference type="HAMAP-Rule" id="MF_00688"/>
    </source>
</evidence>
<feature type="chain" id="PRO_1000212569" description="Leucyl/phenylalanyl-tRNA--protein transferase">
    <location>
        <begin position="1"/>
        <end position="242"/>
    </location>
</feature>
<gene>
    <name evidence="1" type="primary">aat</name>
    <name type="ordered locus">NT01EI_2489</name>
</gene>